<keyword id="KW-0028">Amino-acid biosynthesis</keyword>
<keyword id="KW-0963">Cytoplasm</keyword>
<keyword id="KW-0368">Histidine biosynthesis</keyword>
<evidence type="ECO:0000255" key="1">
    <source>
        <dbReference type="HAMAP-Rule" id="MF_00125"/>
    </source>
</evidence>
<gene>
    <name evidence="1" type="primary">hisZ</name>
    <name type="ordered locus">STER_1206</name>
</gene>
<dbReference type="EMBL" id="CP000419">
    <property type="protein sequence ID" value="ABJ66396.1"/>
    <property type="molecule type" value="Genomic_DNA"/>
</dbReference>
<dbReference type="RefSeq" id="WP_011681271.1">
    <property type="nucleotide sequence ID" value="NC_008532.1"/>
</dbReference>
<dbReference type="SMR" id="Q03K76"/>
<dbReference type="KEGG" id="ste:STER_1206"/>
<dbReference type="HOGENOM" id="CLU_025113_0_0_9"/>
<dbReference type="UniPathway" id="UPA00031">
    <property type="reaction ID" value="UER00006"/>
</dbReference>
<dbReference type="GO" id="GO:0005737">
    <property type="term" value="C:cytoplasm"/>
    <property type="evidence" value="ECO:0007669"/>
    <property type="project" value="UniProtKB-SubCell"/>
</dbReference>
<dbReference type="GO" id="GO:0140096">
    <property type="term" value="F:catalytic activity, acting on a protein"/>
    <property type="evidence" value="ECO:0007669"/>
    <property type="project" value="UniProtKB-ARBA"/>
</dbReference>
<dbReference type="GO" id="GO:0004821">
    <property type="term" value="F:histidine-tRNA ligase activity"/>
    <property type="evidence" value="ECO:0007669"/>
    <property type="project" value="TreeGrafter"/>
</dbReference>
<dbReference type="GO" id="GO:0016740">
    <property type="term" value="F:transferase activity"/>
    <property type="evidence" value="ECO:0007669"/>
    <property type="project" value="UniProtKB-ARBA"/>
</dbReference>
<dbReference type="GO" id="GO:0006427">
    <property type="term" value="P:histidyl-tRNA aminoacylation"/>
    <property type="evidence" value="ECO:0007669"/>
    <property type="project" value="TreeGrafter"/>
</dbReference>
<dbReference type="GO" id="GO:0000105">
    <property type="term" value="P:L-histidine biosynthetic process"/>
    <property type="evidence" value="ECO:0007669"/>
    <property type="project" value="UniProtKB-UniRule"/>
</dbReference>
<dbReference type="CDD" id="cd00773">
    <property type="entry name" value="HisRS-like_core"/>
    <property type="match status" value="1"/>
</dbReference>
<dbReference type="Gene3D" id="3.30.930.10">
    <property type="entry name" value="Bira Bifunctional Protein, Domain 2"/>
    <property type="match status" value="1"/>
</dbReference>
<dbReference type="HAMAP" id="MF_00125">
    <property type="entry name" value="HisZ"/>
    <property type="match status" value="1"/>
</dbReference>
<dbReference type="InterPro" id="IPR045864">
    <property type="entry name" value="aa-tRNA-synth_II/BPL/LPL"/>
</dbReference>
<dbReference type="InterPro" id="IPR041715">
    <property type="entry name" value="HisRS-like_core"/>
</dbReference>
<dbReference type="InterPro" id="IPR004516">
    <property type="entry name" value="HisRS/HisZ"/>
</dbReference>
<dbReference type="InterPro" id="IPR004517">
    <property type="entry name" value="HisZ"/>
</dbReference>
<dbReference type="PANTHER" id="PTHR43707:SF6">
    <property type="entry name" value="ATP PHOSPHORIBOSYLTRANSFERASE REGULATORY SUBUNIT"/>
    <property type="match status" value="1"/>
</dbReference>
<dbReference type="PANTHER" id="PTHR43707">
    <property type="entry name" value="HISTIDYL-TRNA SYNTHETASE"/>
    <property type="match status" value="1"/>
</dbReference>
<dbReference type="Pfam" id="PF13393">
    <property type="entry name" value="tRNA-synt_His"/>
    <property type="match status" value="1"/>
</dbReference>
<dbReference type="PIRSF" id="PIRSF001549">
    <property type="entry name" value="His-tRNA_synth"/>
    <property type="match status" value="1"/>
</dbReference>
<dbReference type="SUPFAM" id="SSF55681">
    <property type="entry name" value="Class II aaRS and biotin synthetases"/>
    <property type="match status" value="1"/>
</dbReference>
<proteinExistence type="inferred from homology"/>
<feature type="chain" id="PRO_1000016288" description="ATP phosphoribosyltransferase regulatory subunit">
    <location>
        <begin position="1"/>
        <end position="326"/>
    </location>
</feature>
<protein>
    <recommendedName>
        <fullName evidence="1">ATP phosphoribosyltransferase regulatory subunit</fullName>
    </recommendedName>
</protein>
<organism>
    <name type="scientific">Streptococcus thermophilus (strain ATCC BAA-491 / LMD-9)</name>
    <dbReference type="NCBI Taxonomy" id="322159"/>
    <lineage>
        <taxon>Bacteria</taxon>
        <taxon>Bacillati</taxon>
        <taxon>Bacillota</taxon>
        <taxon>Bacilli</taxon>
        <taxon>Lactobacillales</taxon>
        <taxon>Streptococcaceae</taxon>
        <taxon>Streptococcus</taxon>
    </lineage>
</organism>
<accession>Q03K76</accession>
<reference key="1">
    <citation type="journal article" date="2006" name="Proc. Natl. Acad. Sci. U.S.A.">
        <title>Comparative genomics of the lactic acid bacteria.</title>
        <authorList>
            <person name="Makarova K.S."/>
            <person name="Slesarev A."/>
            <person name="Wolf Y.I."/>
            <person name="Sorokin A."/>
            <person name="Mirkin B."/>
            <person name="Koonin E.V."/>
            <person name="Pavlov A."/>
            <person name="Pavlova N."/>
            <person name="Karamychev V."/>
            <person name="Polouchine N."/>
            <person name="Shakhova V."/>
            <person name="Grigoriev I."/>
            <person name="Lou Y."/>
            <person name="Rohksar D."/>
            <person name="Lucas S."/>
            <person name="Huang K."/>
            <person name="Goodstein D.M."/>
            <person name="Hawkins T."/>
            <person name="Plengvidhya V."/>
            <person name="Welker D."/>
            <person name="Hughes J."/>
            <person name="Goh Y."/>
            <person name="Benson A."/>
            <person name="Baldwin K."/>
            <person name="Lee J.-H."/>
            <person name="Diaz-Muniz I."/>
            <person name="Dosti B."/>
            <person name="Smeianov V."/>
            <person name="Wechter W."/>
            <person name="Barabote R."/>
            <person name="Lorca G."/>
            <person name="Altermann E."/>
            <person name="Barrangou R."/>
            <person name="Ganesan B."/>
            <person name="Xie Y."/>
            <person name="Rawsthorne H."/>
            <person name="Tamir D."/>
            <person name="Parker C."/>
            <person name="Breidt F."/>
            <person name="Broadbent J.R."/>
            <person name="Hutkins R."/>
            <person name="O'Sullivan D."/>
            <person name="Steele J."/>
            <person name="Unlu G."/>
            <person name="Saier M.H. Jr."/>
            <person name="Klaenhammer T."/>
            <person name="Richardson P."/>
            <person name="Kozyavkin S."/>
            <person name="Weimer B.C."/>
            <person name="Mills D.A."/>
        </authorList>
    </citation>
    <scope>NUCLEOTIDE SEQUENCE [LARGE SCALE GENOMIC DNA]</scope>
    <source>
        <strain>ATCC BAA-491 / LMD-9</strain>
    </source>
</reference>
<sequence length="326" mass="36634">MKKTTLALGMHDKLFKRARTMYQIEHCICDLLMTKGFLRIETPTLEHFEVFSDVVDNGNYNFFDKNGDLISLRPDITSQIGRVIASTQVHTPIKFSYSGKVFNYNEEMRGLSNEHTQAGVEIIGFPVHQALEEAVISAKEALDVAGVRNYKFEFSHAQLLQLIFEELNLPAVKEAELATYIRDKSITGLKEFTKENPSQYDKVLEQLPSLFGETTAVLTEARQLTDNESFLTALDSLEVLTSRLADNLPETTLDLAQLPAVPYYTGIMFKVFGDKVPDAFVSGGRYDKLFERFGATELTAVGWAIDIDSVYQAVHDDVEFGGDMDD</sequence>
<name>HISZ_STRTD</name>
<comment type="function">
    <text evidence="1">Required for the first step of histidine biosynthesis. May allow the feedback regulation of ATP phosphoribosyltransferase activity by histidine.</text>
</comment>
<comment type="pathway">
    <text evidence="1">Amino-acid biosynthesis; L-histidine biosynthesis; L-histidine from 5-phospho-alpha-D-ribose 1-diphosphate: step 1/9.</text>
</comment>
<comment type="subunit">
    <text evidence="1">Heteromultimer composed of HisG and HisZ subunits.</text>
</comment>
<comment type="subcellular location">
    <subcellularLocation>
        <location evidence="1">Cytoplasm</location>
    </subcellularLocation>
</comment>
<comment type="miscellaneous">
    <text>This function is generally fulfilled by the C-terminal part of HisG, which is missing in some bacteria such as this one.</text>
</comment>
<comment type="similarity">
    <text evidence="1">Belongs to the class-II aminoacyl-tRNA synthetase family. HisZ subfamily.</text>
</comment>